<organism>
    <name type="scientific">Homo sapiens</name>
    <name type="common">Human</name>
    <dbReference type="NCBI Taxonomy" id="9606"/>
    <lineage>
        <taxon>Eukaryota</taxon>
        <taxon>Metazoa</taxon>
        <taxon>Chordata</taxon>
        <taxon>Craniata</taxon>
        <taxon>Vertebrata</taxon>
        <taxon>Euteleostomi</taxon>
        <taxon>Mammalia</taxon>
        <taxon>Eutheria</taxon>
        <taxon>Euarchontoglires</taxon>
        <taxon>Primates</taxon>
        <taxon>Haplorrhini</taxon>
        <taxon>Catarrhini</taxon>
        <taxon>Hominidae</taxon>
        <taxon>Homo</taxon>
    </lineage>
</organism>
<keyword id="KW-0025">Alternative splicing</keyword>
<keyword id="KW-0597">Phosphoprotein</keyword>
<keyword id="KW-1267">Proteomics identification</keyword>
<keyword id="KW-1185">Reference proteome</keyword>
<comment type="subunit">
    <text evidence="2 3">Interacts with HUS1, HUS1B, RAD1, RAD9A and RAD17.</text>
</comment>
<comment type="alternative products">
    <event type="alternative splicing"/>
    <isoform>
        <id>Q6WBX8-5</id>
        <name>5</name>
        <sequence type="displayed"/>
    </isoform>
    <isoform>
        <id>Q6WBX8-1</id>
        <name>1</name>
        <sequence type="described" ref="VSP_017446"/>
    </isoform>
    <isoform>
        <id>Q6WBX8-2</id>
        <name>2</name>
        <sequence type="described" ref="VSP_017445 VSP_017446"/>
    </isoform>
    <isoform>
        <id>Q6WBX8-3</id>
        <name>3</name>
        <sequence type="described" ref="VSP_017444 VSP_017446"/>
    </isoform>
    <isoform>
        <id>Q6WBX8-4</id>
        <name>4</name>
        <sequence type="described" ref="VSP_017444"/>
    </isoform>
</comment>
<comment type="tissue specificity">
    <text evidence="2 3">Expressed in testis and skeletal muscle.</text>
</comment>
<comment type="similarity">
    <text evidence="7">Belongs to the rad9 family.</text>
</comment>
<reference key="1">
    <citation type="journal article" date="2003" name="Cancer Res.">
        <title>Expression of mammalian paralogues of HRAD9 and Mrad9 checkpoint control genes in normal and cancerous testicular tissue.</title>
        <authorList>
            <person name="Hopkins K.M."/>
            <person name="Wang X."/>
            <person name="Berlin A."/>
            <person name="Hang H."/>
            <person name="Thaker H.M."/>
            <person name="Lieberman H.B."/>
        </authorList>
    </citation>
    <scope>NUCLEOTIDE SEQUENCE [MRNA] (ISOFORM 1)</scope>
    <scope>INTERACTION WITH HUS1; HUS1B; RAD1 AND RAD9A</scope>
    <scope>TISSUE SPECIFICITY</scope>
    <source>
        <tissue>Testis</tissue>
    </source>
</reference>
<reference key="2">
    <citation type="journal article" date="2004" name="Nat. Genet.">
        <title>Complete sequencing and characterization of 21,243 full-length human cDNAs.</title>
        <authorList>
            <person name="Ota T."/>
            <person name="Suzuki Y."/>
            <person name="Nishikawa T."/>
            <person name="Otsuki T."/>
            <person name="Sugiyama T."/>
            <person name="Irie R."/>
            <person name="Wakamatsu A."/>
            <person name="Hayashi K."/>
            <person name="Sato H."/>
            <person name="Nagai K."/>
            <person name="Kimura K."/>
            <person name="Makita H."/>
            <person name="Sekine M."/>
            <person name="Obayashi M."/>
            <person name="Nishi T."/>
            <person name="Shibahara T."/>
            <person name="Tanaka T."/>
            <person name="Ishii S."/>
            <person name="Yamamoto J."/>
            <person name="Saito K."/>
            <person name="Kawai Y."/>
            <person name="Isono Y."/>
            <person name="Nakamura Y."/>
            <person name="Nagahari K."/>
            <person name="Murakami K."/>
            <person name="Yasuda T."/>
            <person name="Iwayanagi T."/>
            <person name="Wagatsuma M."/>
            <person name="Shiratori A."/>
            <person name="Sudo H."/>
            <person name="Hosoiri T."/>
            <person name="Kaku Y."/>
            <person name="Kodaira H."/>
            <person name="Kondo H."/>
            <person name="Sugawara M."/>
            <person name="Takahashi M."/>
            <person name="Kanda K."/>
            <person name="Yokoi T."/>
            <person name="Furuya T."/>
            <person name="Kikkawa E."/>
            <person name="Omura Y."/>
            <person name="Abe K."/>
            <person name="Kamihara K."/>
            <person name="Katsuta N."/>
            <person name="Sato K."/>
            <person name="Tanikawa M."/>
            <person name="Yamazaki M."/>
            <person name="Ninomiya K."/>
            <person name="Ishibashi T."/>
            <person name="Yamashita H."/>
            <person name="Murakawa K."/>
            <person name="Fujimori K."/>
            <person name="Tanai H."/>
            <person name="Kimata M."/>
            <person name="Watanabe M."/>
            <person name="Hiraoka S."/>
            <person name="Chiba Y."/>
            <person name="Ishida S."/>
            <person name="Ono Y."/>
            <person name="Takiguchi S."/>
            <person name="Watanabe S."/>
            <person name="Yosida M."/>
            <person name="Hotuta T."/>
            <person name="Kusano J."/>
            <person name="Kanehori K."/>
            <person name="Takahashi-Fujii A."/>
            <person name="Hara H."/>
            <person name="Tanase T.-O."/>
            <person name="Nomura Y."/>
            <person name="Togiya S."/>
            <person name="Komai F."/>
            <person name="Hara R."/>
            <person name="Takeuchi K."/>
            <person name="Arita M."/>
            <person name="Imose N."/>
            <person name="Musashino K."/>
            <person name="Yuuki H."/>
            <person name="Oshima A."/>
            <person name="Sasaki N."/>
            <person name="Aotsuka S."/>
            <person name="Yoshikawa Y."/>
            <person name="Matsunawa H."/>
            <person name="Ichihara T."/>
            <person name="Shiohata N."/>
            <person name="Sano S."/>
            <person name="Moriya S."/>
            <person name="Momiyama H."/>
            <person name="Satoh N."/>
            <person name="Takami S."/>
            <person name="Terashima Y."/>
            <person name="Suzuki O."/>
            <person name="Nakagawa S."/>
            <person name="Senoh A."/>
            <person name="Mizoguchi H."/>
            <person name="Goto Y."/>
            <person name="Shimizu F."/>
            <person name="Wakebe H."/>
            <person name="Hishigaki H."/>
            <person name="Watanabe T."/>
            <person name="Sugiyama A."/>
            <person name="Takemoto M."/>
            <person name="Kawakami B."/>
            <person name="Yamazaki M."/>
            <person name="Watanabe K."/>
            <person name="Kumagai A."/>
            <person name="Itakura S."/>
            <person name="Fukuzumi Y."/>
            <person name="Fujimori Y."/>
            <person name="Komiyama M."/>
            <person name="Tashiro H."/>
            <person name="Tanigami A."/>
            <person name="Fujiwara T."/>
            <person name="Ono T."/>
            <person name="Yamada K."/>
            <person name="Fujii Y."/>
            <person name="Ozaki K."/>
            <person name="Hirao M."/>
            <person name="Ohmori Y."/>
            <person name="Kawabata A."/>
            <person name="Hikiji T."/>
            <person name="Kobatake N."/>
            <person name="Inagaki H."/>
            <person name="Ikema Y."/>
            <person name="Okamoto S."/>
            <person name="Okitani R."/>
            <person name="Kawakami T."/>
            <person name="Noguchi S."/>
            <person name="Itoh T."/>
            <person name="Shigeta K."/>
            <person name="Senba T."/>
            <person name="Matsumura K."/>
            <person name="Nakajima Y."/>
            <person name="Mizuno T."/>
            <person name="Morinaga M."/>
            <person name="Sasaki M."/>
            <person name="Togashi T."/>
            <person name="Oyama M."/>
            <person name="Hata H."/>
            <person name="Watanabe M."/>
            <person name="Komatsu T."/>
            <person name="Mizushima-Sugano J."/>
            <person name="Satoh T."/>
            <person name="Shirai Y."/>
            <person name="Takahashi Y."/>
            <person name="Nakagawa K."/>
            <person name="Okumura K."/>
            <person name="Nagase T."/>
            <person name="Nomura N."/>
            <person name="Kikuchi H."/>
            <person name="Masuho Y."/>
            <person name="Yamashita R."/>
            <person name="Nakai K."/>
            <person name="Yada T."/>
            <person name="Nakamura Y."/>
            <person name="Ohara O."/>
            <person name="Isogai T."/>
            <person name="Sugano S."/>
        </authorList>
    </citation>
    <scope>NUCLEOTIDE SEQUENCE [LARGE SCALE MRNA] (ISOFORMS 2; 3 AND 4)</scope>
    <source>
        <tissue>Testis</tissue>
    </source>
</reference>
<reference key="3">
    <citation type="journal article" date="2006" name="Nature">
        <title>The finished DNA sequence of human chromosome 12.</title>
        <authorList>
            <person name="Scherer S.E."/>
            <person name="Muzny D.M."/>
            <person name="Buhay C.J."/>
            <person name="Chen R."/>
            <person name="Cree A."/>
            <person name="Ding Y."/>
            <person name="Dugan-Rocha S."/>
            <person name="Gill R."/>
            <person name="Gunaratne P."/>
            <person name="Harris R.A."/>
            <person name="Hawes A.C."/>
            <person name="Hernandez J."/>
            <person name="Hodgson A.V."/>
            <person name="Hume J."/>
            <person name="Jackson A."/>
            <person name="Khan Z.M."/>
            <person name="Kovar-Smith C."/>
            <person name="Lewis L.R."/>
            <person name="Lozado R.J."/>
            <person name="Metzker M.L."/>
            <person name="Milosavljevic A."/>
            <person name="Miner G.R."/>
            <person name="Montgomery K.T."/>
            <person name="Morgan M.B."/>
            <person name="Nazareth L.V."/>
            <person name="Scott G."/>
            <person name="Sodergren E."/>
            <person name="Song X.-Z."/>
            <person name="Steffen D."/>
            <person name="Lovering R.C."/>
            <person name="Wheeler D.A."/>
            <person name="Worley K.C."/>
            <person name="Yuan Y."/>
            <person name="Zhang Z."/>
            <person name="Adams C.Q."/>
            <person name="Ansari-Lari M.A."/>
            <person name="Ayele M."/>
            <person name="Brown M.J."/>
            <person name="Chen G."/>
            <person name="Chen Z."/>
            <person name="Clerc-Blankenburg K.P."/>
            <person name="Davis C."/>
            <person name="Delgado O."/>
            <person name="Dinh H.H."/>
            <person name="Draper H."/>
            <person name="Gonzalez-Garay M.L."/>
            <person name="Havlak P."/>
            <person name="Jackson L.R."/>
            <person name="Jacob L.S."/>
            <person name="Kelly S.H."/>
            <person name="Li L."/>
            <person name="Li Z."/>
            <person name="Liu J."/>
            <person name="Liu W."/>
            <person name="Lu J."/>
            <person name="Maheshwari M."/>
            <person name="Nguyen B.-V."/>
            <person name="Okwuonu G.O."/>
            <person name="Pasternak S."/>
            <person name="Perez L.M."/>
            <person name="Plopper F.J.H."/>
            <person name="Santibanez J."/>
            <person name="Shen H."/>
            <person name="Tabor P.E."/>
            <person name="Verduzco D."/>
            <person name="Waldron L."/>
            <person name="Wang Q."/>
            <person name="Williams G.A."/>
            <person name="Zhang J."/>
            <person name="Zhou J."/>
            <person name="Allen C.C."/>
            <person name="Amin A.G."/>
            <person name="Anyalebechi V."/>
            <person name="Bailey M."/>
            <person name="Barbaria J.A."/>
            <person name="Bimage K.E."/>
            <person name="Bryant N.P."/>
            <person name="Burch P.E."/>
            <person name="Burkett C.E."/>
            <person name="Burrell K.L."/>
            <person name="Calderon E."/>
            <person name="Cardenas V."/>
            <person name="Carter K."/>
            <person name="Casias K."/>
            <person name="Cavazos I."/>
            <person name="Cavazos S.R."/>
            <person name="Ceasar H."/>
            <person name="Chacko J."/>
            <person name="Chan S.N."/>
            <person name="Chavez D."/>
            <person name="Christopoulos C."/>
            <person name="Chu J."/>
            <person name="Cockrell R."/>
            <person name="Cox C.D."/>
            <person name="Dang M."/>
            <person name="Dathorne S.R."/>
            <person name="David R."/>
            <person name="Davis C.M."/>
            <person name="Davy-Carroll L."/>
            <person name="Deshazo D.R."/>
            <person name="Donlin J.E."/>
            <person name="D'Souza L."/>
            <person name="Eaves K.A."/>
            <person name="Egan A."/>
            <person name="Emery-Cohen A.J."/>
            <person name="Escotto M."/>
            <person name="Flagg N."/>
            <person name="Forbes L.D."/>
            <person name="Gabisi A.M."/>
            <person name="Garza M."/>
            <person name="Hamilton C."/>
            <person name="Henderson N."/>
            <person name="Hernandez O."/>
            <person name="Hines S."/>
            <person name="Hogues M.E."/>
            <person name="Huang M."/>
            <person name="Idlebird D.G."/>
            <person name="Johnson R."/>
            <person name="Jolivet A."/>
            <person name="Jones S."/>
            <person name="Kagan R."/>
            <person name="King L.M."/>
            <person name="Leal B."/>
            <person name="Lebow H."/>
            <person name="Lee S."/>
            <person name="LeVan J.M."/>
            <person name="Lewis L.C."/>
            <person name="London P."/>
            <person name="Lorensuhewa L.M."/>
            <person name="Loulseged H."/>
            <person name="Lovett D.A."/>
            <person name="Lucier A."/>
            <person name="Lucier R.L."/>
            <person name="Ma J."/>
            <person name="Madu R.C."/>
            <person name="Mapua P."/>
            <person name="Martindale A.D."/>
            <person name="Martinez E."/>
            <person name="Massey E."/>
            <person name="Mawhiney S."/>
            <person name="Meador M.G."/>
            <person name="Mendez S."/>
            <person name="Mercado C."/>
            <person name="Mercado I.C."/>
            <person name="Merritt C.E."/>
            <person name="Miner Z.L."/>
            <person name="Minja E."/>
            <person name="Mitchell T."/>
            <person name="Mohabbat F."/>
            <person name="Mohabbat K."/>
            <person name="Montgomery B."/>
            <person name="Moore N."/>
            <person name="Morris S."/>
            <person name="Munidasa M."/>
            <person name="Ngo R.N."/>
            <person name="Nguyen N.B."/>
            <person name="Nickerson E."/>
            <person name="Nwaokelemeh O.O."/>
            <person name="Nwokenkwo S."/>
            <person name="Obregon M."/>
            <person name="Oguh M."/>
            <person name="Oragunye N."/>
            <person name="Oviedo R.J."/>
            <person name="Parish B.J."/>
            <person name="Parker D.N."/>
            <person name="Parrish J."/>
            <person name="Parks K.L."/>
            <person name="Paul H.A."/>
            <person name="Payton B.A."/>
            <person name="Perez A."/>
            <person name="Perrin W."/>
            <person name="Pickens A."/>
            <person name="Primus E.L."/>
            <person name="Pu L.-L."/>
            <person name="Puazo M."/>
            <person name="Quiles M.M."/>
            <person name="Quiroz J.B."/>
            <person name="Rabata D."/>
            <person name="Reeves K."/>
            <person name="Ruiz S.J."/>
            <person name="Shao H."/>
            <person name="Sisson I."/>
            <person name="Sonaike T."/>
            <person name="Sorelle R.P."/>
            <person name="Sutton A.E."/>
            <person name="Svatek A.F."/>
            <person name="Svetz L.A."/>
            <person name="Tamerisa K.S."/>
            <person name="Taylor T.R."/>
            <person name="Teague B."/>
            <person name="Thomas N."/>
            <person name="Thorn R.D."/>
            <person name="Trejos Z.Y."/>
            <person name="Trevino B.K."/>
            <person name="Ukegbu O.N."/>
            <person name="Urban J.B."/>
            <person name="Vasquez L.I."/>
            <person name="Vera V.A."/>
            <person name="Villasana D.M."/>
            <person name="Wang L."/>
            <person name="Ward-Moore S."/>
            <person name="Warren J.T."/>
            <person name="Wei X."/>
            <person name="White F."/>
            <person name="Williamson A.L."/>
            <person name="Wleczyk R."/>
            <person name="Wooden H.S."/>
            <person name="Wooden S.H."/>
            <person name="Yen J."/>
            <person name="Yoon L."/>
            <person name="Yoon V."/>
            <person name="Zorrilla S.E."/>
            <person name="Nelson D."/>
            <person name="Kucherlapati R."/>
            <person name="Weinstock G."/>
            <person name="Gibbs R.A."/>
        </authorList>
    </citation>
    <scope>NUCLEOTIDE SEQUENCE [LARGE SCALE GENOMIC DNA]</scope>
</reference>
<reference key="4">
    <citation type="journal article" date="2004" name="Genome Res.">
        <title>The status, quality, and expansion of the NIH full-length cDNA project: the Mammalian Gene Collection (MGC).</title>
        <authorList>
            <consortium name="The MGC Project Team"/>
        </authorList>
    </citation>
    <scope>NUCLEOTIDE SEQUENCE [LARGE SCALE MRNA] (ISOFORMS 3 AND 5)</scope>
    <source>
        <tissue>Testis</tissue>
    </source>
</reference>
<reference key="5">
    <citation type="journal article" date="2003" name="Genomics">
        <title>Identification and characterization of RAD9B, a paralog of the RAD9 checkpoint gene.</title>
        <authorList>
            <person name="Dufault V.M."/>
            <person name="Oestreich A.J."/>
            <person name="Vroman B.T."/>
            <person name="Karnitz L.M."/>
        </authorList>
    </citation>
    <scope>INTERACTION WITH HUS1; HUS1B; RAD1 AND RAD17</scope>
    <scope>TISSUE SPECIFICITY</scope>
</reference>
<accession>Q6WBX8</accession>
<accession>Q5U5K0</accession>
<accession>Q6NVJ1</accession>
<accession>Q6ZVT7</accession>
<accession>Q8N7T9</accession>
<accession>Q96LI8</accession>
<feature type="chain" id="PRO_0000226698" description="Cell cycle checkpoint control protein RAD9B">
    <location>
        <begin position="1"/>
        <end position="426"/>
    </location>
</feature>
<feature type="modified residue" description="Phosphoserine" evidence="1">
    <location>
        <position position="359"/>
    </location>
</feature>
<feature type="splice variant" id="VSP_017444" description="In isoform 3 and isoform 4." evidence="5 6">
    <location>
        <begin position="1"/>
        <end position="155"/>
    </location>
</feature>
<feature type="splice variant" id="VSP_017445" description="In isoform 2." evidence="5">
    <location>
        <begin position="1"/>
        <end position="69"/>
    </location>
</feature>
<feature type="splice variant" id="VSP_017446" description="In isoform 1, isoform 2 and isoform 3." evidence="4 5 6">
    <original>VCCRKEFNGSDAKYFCII</original>
    <variation>GSFSIF</variation>
    <location>
        <begin position="409"/>
        <end position="426"/>
    </location>
</feature>
<feature type="sequence conflict" description="In Ref. 2; BAC05138." evidence="7" ref="2">
    <original>C</original>
    <variation>Y</variation>
    <location>
        <position position="226"/>
    </location>
</feature>
<feature type="sequence conflict" description="In Ref. 2; BAB71704." evidence="7" ref="2">
    <original>D</original>
    <variation>G</variation>
    <location>
        <position position="401"/>
    </location>
</feature>
<dbReference type="EMBL" id="AY297459">
    <property type="protein sequence ID" value="AAQ62859.1"/>
    <property type="molecule type" value="mRNA"/>
</dbReference>
<dbReference type="EMBL" id="AK058176">
    <property type="protein sequence ID" value="BAB71704.1"/>
    <property type="molecule type" value="mRNA"/>
</dbReference>
<dbReference type="EMBL" id="AK097665">
    <property type="protein sequence ID" value="BAC05138.1"/>
    <property type="molecule type" value="mRNA"/>
</dbReference>
<dbReference type="EMBL" id="AK124109">
    <property type="protein sequence ID" value="BAC85774.1"/>
    <property type="molecule type" value="mRNA"/>
</dbReference>
<dbReference type="EMBL" id="AC002350">
    <property type="status" value="NOT_ANNOTATED_CDS"/>
    <property type="molecule type" value="Genomic_DNA"/>
</dbReference>
<dbReference type="EMBL" id="BC047645">
    <property type="protein sequence ID" value="AAH47645.1"/>
    <property type="molecule type" value="mRNA"/>
</dbReference>
<dbReference type="EMBL" id="BC068031">
    <property type="protein sequence ID" value="AAH68031.2"/>
    <property type="molecule type" value="mRNA"/>
</dbReference>
<dbReference type="CCDS" id="CCDS73527.1">
    <molecule id="Q6WBX8-2"/>
</dbReference>
<dbReference type="RefSeq" id="NP_001273460.1">
    <molecule id="Q6WBX8-2"/>
    <property type="nucleotide sequence ID" value="NM_001286531.2"/>
</dbReference>
<dbReference type="RefSeq" id="NP_001273461.1">
    <molecule id="Q6WBX8-2"/>
    <property type="nucleotide sequence ID" value="NM_001286532.2"/>
</dbReference>
<dbReference type="RefSeq" id="NP_001273462.1">
    <molecule id="Q6WBX8-3"/>
    <property type="nucleotide sequence ID" value="NM_001286533.2"/>
</dbReference>
<dbReference type="RefSeq" id="NP_001273463.1">
    <molecule id="Q6WBX8-3"/>
    <property type="nucleotide sequence ID" value="NM_001286534.2"/>
</dbReference>
<dbReference type="RefSeq" id="NP_001273464.1">
    <property type="nucleotide sequence ID" value="NM_001286535.1"/>
</dbReference>
<dbReference type="RefSeq" id="NP_001273465.1">
    <property type="nucleotide sequence ID" value="NM_001286536.1"/>
</dbReference>
<dbReference type="RefSeq" id="NP_001354980.1">
    <molecule id="Q6WBX8-2"/>
    <property type="nucleotide sequence ID" value="NM_001368051.1"/>
</dbReference>
<dbReference type="RefSeq" id="NP_689655.3">
    <property type="nucleotide sequence ID" value="NM_152442.3"/>
</dbReference>
<dbReference type="RefSeq" id="XP_011536276.1">
    <property type="nucleotide sequence ID" value="XM_011537974.2"/>
</dbReference>
<dbReference type="RefSeq" id="XP_016874367.1">
    <property type="nucleotide sequence ID" value="XM_017018878.1"/>
</dbReference>
<dbReference type="RefSeq" id="XP_016874371.1">
    <property type="nucleotide sequence ID" value="XM_017018882.1"/>
</dbReference>
<dbReference type="RefSeq" id="XP_024304628.1">
    <molecule id="Q6WBX8-2"/>
    <property type="nucleotide sequence ID" value="XM_024448860.2"/>
</dbReference>
<dbReference type="RefSeq" id="XP_047284349.1">
    <molecule id="Q6WBX8-2"/>
    <property type="nucleotide sequence ID" value="XM_047428393.1"/>
</dbReference>
<dbReference type="RefSeq" id="XP_054227185.1">
    <molecule id="Q6WBX8-2"/>
    <property type="nucleotide sequence ID" value="XM_054371210.1"/>
</dbReference>
<dbReference type="RefSeq" id="XP_054227186.1">
    <molecule id="Q6WBX8-2"/>
    <property type="nucleotide sequence ID" value="XM_054371211.1"/>
</dbReference>
<dbReference type="SMR" id="Q6WBX8"/>
<dbReference type="BioGRID" id="126872">
    <property type="interactions" value="11"/>
</dbReference>
<dbReference type="CORUM" id="Q6WBX8"/>
<dbReference type="FunCoup" id="Q6WBX8">
    <property type="interactions" value="1872"/>
</dbReference>
<dbReference type="IntAct" id="Q6WBX8">
    <property type="interactions" value="4"/>
</dbReference>
<dbReference type="STRING" id="9606.ENSP00000376440"/>
<dbReference type="iPTMnet" id="Q6WBX8"/>
<dbReference type="PhosphoSitePlus" id="Q6WBX8"/>
<dbReference type="BioMuta" id="RAD9B"/>
<dbReference type="MassIVE" id="Q6WBX8"/>
<dbReference type="PaxDb" id="9606-ENSP00000376440"/>
<dbReference type="PeptideAtlas" id="Q6WBX8"/>
<dbReference type="ProteomicsDB" id="67754">
    <molecule id="Q6WBX8-5"/>
</dbReference>
<dbReference type="ProteomicsDB" id="67755">
    <molecule id="Q6WBX8-1"/>
</dbReference>
<dbReference type="ProteomicsDB" id="67756">
    <molecule id="Q6WBX8-2"/>
</dbReference>
<dbReference type="ProteomicsDB" id="67757">
    <molecule id="Q6WBX8-3"/>
</dbReference>
<dbReference type="ProteomicsDB" id="67758">
    <molecule id="Q6WBX8-4"/>
</dbReference>
<dbReference type="Antibodypedia" id="31019">
    <property type="antibodies" value="82 antibodies from 19 providers"/>
</dbReference>
<dbReference type="DNASU" id="144715"/>
<dbReference type="Ensembl" id="ENST00000409246.5">
    <molecule id="Q6WBX8-2"/>
    <property type="protein sequence ID" value="ENSP00000387329.1"/>
    <property type="gene ID" value="ENSG00000151164.19"/>
</dbReference>
<dbReference type="Ensembl" id="ENST00000409425.5">
    <molecule id="Q6WBX8-2"/>
    <property type="protein sequence ID" value="ENSP00000386629.1"/>
    <property type="gene ID" value="ENSG00000151164.19"/>
</dbReference>
<dbReference type="GeneID" id="144715"/>
<dbReference type="KEGG" id="hsa:144715"/>
<dbReference type="UCSC" id="uc001tre.6">
    <molecule id="Q6WBX8-5"/>
    <property type="organism name" value="human"/>
</dbReference>
<dbReference type="AGR" id="HGNC:21700"/>
<dbReference type="CTD" id="144715"/>
<dbReference type="DisGeNET" id="144715"/>
<dbReference type="GeneCards" id="RAD9B"/>
<dbReference type="HGNC" id="HGNC:21700">
    <property type="gene designation" value="RAD9B"/>
</dbReference>
<dbReference type="HPA" id="ENSG00000151164">
    <property type="expression patterns" value="Tissue enriched (testis)"/>
</dbReference>
<dbReference type="MalaCards" id="RAD9B"/>
<dbReference type="MIM" id="608368">
    <property type="type" value="gene"/>
</dbReference>
<dbReference type="neXtProt" id="NX_Q6WBX8"/>
<dbReference type="OpenTargets" id="ENSG00000151164"/>
<dbReference type="PharmGKB" id="PA134889252"/>
<dbReference type="VEuPathDB" id="HostDB:ENSG00000151164"/>
<dbReference type="eggNOG" id="KOG2810">
    <property type="taxonomic scope" value="Eukaryota"/>
</dbReference>
<dbReference type="GeneTree" id="ENSGT00390000005767"/>
<dbReference type="InParanoid" id="Q6WBX8"/>
<dbReference type="OMA" id="RTRQHHL"/>
<dbReference type="OrthoDB" id="60092at2759"/>
<dbReference type="PAN-GO" id="Q6WBX8">
    <property type="GO annotations" value="5 GO annotations based on evolutionary models"/>
</dbReference>
<dbReference type="PhylomeDB" id="Q6WBX8"/>
<dbReference type="PathwayCommons" id="Q6WBX8"/>
<dbReference type="Reactome" id="R-HSA-176187">
    <property type="pathway name" value="Activation of ATR in response to replication stress"/>
</dbReference>
<dbReference type="Reactome" id="R-HSA-5685938">
    <property type="pathway name" value="HDR through Single Strand Annealing (SSA)"/>
</dbReference>
<dbReference type="Reactome" id="R-HSA-5693607">
    <property type="pathway name" value="Processing of DNA double-strand break ends"/>
</dbReference>
<dbReference type="Reactome" id="R-HSA-5693616">
    <property type="pathway name" value="Presynaptic phase of homologous DNA pairing and strand exchange"/>
</dbReference>
<dbReference type="Reactome" id="R-HSA-6804756">
    <property type="pathway name" value="Regulation of TP53 Activity through Phosphorylation"/>
</dbReference>
<dbReference type="Reactome" id="R-HSA-69473">
    <property type="pathway name" value="G2/M DNA damage checkpoint"/>
</dbReference>
<dbReference type="Reactome" id="R-HSA-9709570">
    <property type="pathway name" value="Impaired BRCA2 binding to RAD51"/>
</dbReference>
<dbReference type="SignaLink" id="Q6WBX8"/>
<dbReference type="BioGRID-ORCS" id="144715">
    <property type="hits" value="42 hits in 1159 CRISPR screens"/>
</dbReference>
<dbReference type="ChiTaRS" id="RAD9B">
    <property type="organism name" value="human"/>
</dbReference>
<dbReference type="GenomeRNAi" id="144715"/>
<dbReference type="Pharos" id="Q6WBX8">
    <property type="development level" value="Tdark"/>
</dbReference>
<dbReference type="PRO" id="PR:Q6WBX8"/>
<dbReference type="Proteomes" id="UP000005640">
    <property type="component" value="Chromosome 12"/>
</dbReference>
<dbReference type="RNAct" id="Q6WBX8">
    <property type="molecule type" value="protein"/>
</dbReference>
<dbReference type="Bgee" id="ENSG00000151164">
    <property type="expression patterns" value="Expressed in male germ line stem cell (sensu Vertebrata) in testis and 102 other cell types or tissues"/>
</dbReference>
<dbReference type="ExpressionAtlas" id="Q6WBX8">
    <property type="expression patterns" value="baseline and differential"/>
</dbReference>
<dbReference type="GO" id="GO:0030896">
    <property type="term" value="C:checkpoint clamp complex"/>
    <property type="evidence" value="ECO:0000318"/>
    <property type="project" value="GO_Central"/>
</dbReference>
<dbReference type="GO" id="GO:0005654">
    <property type="term" value="C:nucleoplasm"/>
    <property type="evidence" value="ECO:0000304"/>
    <property type="project" value="Reactome"/>
</dbReference>
<dbReference type="GO" id="GO:0005634">
    <property type="term" value="C:nucleus"/>
    <property type="evidence" value="ECO:0000314"/>
    <property type="project" value="MGI"/>
</dbReference>
<dbReference type="GO" id="GO:0071479">
    <property type="term" value="P:cellular response to ionizing radiation"/>
    <property type="evidence" value="ECO:0000318"/>
    <property type="project" value="GO_Central"/>
</dbReference>
<dbReference type="GO" id="GO:0006281">
    <property type="term" value="P:DNA repair"/>
    <property type="evidence" value="ECO:0000318"/>
    <property type="project" value="GO_Central"/>
</dbReference>
<dbReference type="GO" id="GO:0000076">
    <property type="term" value="P:DNA replication checkpoint signaling"/>
    <property type="evidence" value="ECO:0000318"/>
    <property type="project" value="GO_Central"/>
</dbReference>
<dbReference type="GO" id="GO:0031573">
    <property type="term" value="P:mitotic intra-S DNA damage checkpoint signaling"/>
    <property type="evidence" value="ECO:0000318"/>
    <property type="project" value="GO_Central"/>
</dbReference>
<dbReference type="CDD" id="cd00577">
    <property type="entry name" value="PCNA"/>
    <property type="match status" value="1"/>
</dbReference>
<dbReference type="FunFam" id="3.70.10.10:FF:000008">
    <property type="entry name" value="Cell cycle checkpoint control protein"/>
    <property type="match status" value="1"/>
</dbReference>
<dbReference type="Gene3D" id="3.70.10.10">
    <property type="match status" value="1"/>
</dbReference>
<dbReference type="InterPro" id="IPR046938">
    <property type="entry name" value="DNA_clamp_sf"/>
</dbReference>
<dbReference type="InterPro" id="IPR026584">
    <property type="entry name" value="Rad9"/>
</dbReference>
<dbReference type="InterPro" id="IPR007268">
    <property type="entry name" value="Rad9/Ddc1"/>
</dbReference>
<dbReference type="PANTHER" id="PTHR15237:SF2">
    <property type="entry name" value="CELL CYCLE CHECKPOINT CONTROL PROTEIN RAD9B"/>
    <property type="match status" value="1"/>
</dbReference>
<dbReference type="PANTHER" id="PTHR15237">
    <property type="entry name" value="DNA REPAIR PROTEIN RAD9"/>
    <property type="match status" value="1"/>
</dbReference>
<dbReference type="Pfam" id="PF04139">
    <property type="entry name" value="Rad9"/>
    <property type="match status" value="1"/>
</dbReference>
<dbReference type="PIRSF" id="PIRSF009303">
    <property type="entry name" value="Cell_cycle_RAD9"/>
    <property type="match status" value="1"/>
</dbReference>
<dbReference type="SUPFAM" id="SSF55979">
    <property type="entry name" value="DNA clamp"/>
    <property type="match status" value="1"/>
</dbReference>
<evidence type="ECO:0000250" key="1">
    <source>
        <dbReference type="UniProtKB" id="Q6WBX7"/>
    </source>
</evidence>
<evidence type="ECO:0000269" key="2">
    <source>
    </source>
</evidence>
<evidence type="ECO:0000269" key="3">
    <source>
    </source>
</evidence>
<evidence type="ECO:0000303" key="4">
    <source>
    </source>
</evidence>
<evidence type="ECO:0000303" key="5">
    <source>
    </source>
</evidence>
<evidence type="ECO:0000303" key="6">
    <source>
    </source>
</evidence>
<evidence type="ECO:0000305" key="7"/>
<gene>
    <name type="primary">RAD9B</name>
</gene>
<proteinExistence type="evidence at protein level"/>
<protein>
    <recommendedName>
        <fullName>Cell cycle checkpoint control protein RAD9B</fullName>
    </recommendedName>
    <alternativeName>
        <fullName>DNA repair exonuclease rad9 homolog B</fullName>
        <shortName>hRAD9B</shortName>
    </alternativeName>
</protein>
<sequence>MLKCVMSGSQVKVFGKAVQALSRISDEFWLDPSKKGLALRCVNSSRSAYGCVLFSPVFFQHYQWSALVKMSENELDTTLHLKCKLGMKSILPIFRCLNSLERNIEKCRIFTRSDKCKVVIQFFYRHGIKRTHNICFQESQPLQVIFDKNVCTNTLMIQPRLLADAIVLFTSSQEEVTLAVTPLNFCLKSSNEESMDLSNAVHSEMFVGSDEFDFFQIGMDTEITFCFKELKGILTFSEATHAPISIYFDFPGKPLALSIDDMLVEANFILATLADEQSRASSPQSLCLSQKRKRSDLIEKKAGKNVTGQALECISKKAAPRRLYPKETLTNISALENCGSPAMKRVDGDVSEVSESSVSNTEEVPGSLCLRKFSCMFFGAVSSDQQEHFNHPFDSLARASDSEEDMNNVCCRKEFNGSDAKYFCII</sequence>
<name>RAD9B_HUMAN</name>